<accession>Q8IYB9</accession>
<accession>Q7Z3I0</accession>
<evidence type="ECO:0000255" key="1">
    <source>
        <dbReference type="PROSITE-ProRule" id="PRU00042"/>
    </source>
</evidence>
<evidence type="ECO:0000255" key="2">
    <source>
        <dbReference type="PROSITE-ProRule" id="PRU00119"/>
    </source>
</evidence>
<evidence type="ECO:0000305" key="3"/>
<evidence type="ECO:0000312" key="4">
    <source>
        <dbReference type="EMBL" id="CAD97883.1"/>
    </source>
</evidence>
<dbReference type="EMBL" id="BX537887">
    <property type="protein sequence ID" value="CAD97883.1"/>
    <property type="molecule type" value="mRNA"/>
</dbReference>
<dbReference type="EMBL" id="AC253576">
    <property type="status" value="NOT_ANNOTATED_CDS"/>
    <property type="molecule type" value="Genomic_DNA"/>
</dbReference>
<dbReference type="EMBL" id="BC036110">
    <property type="protein sequence ID" value="AAH36110.1"/>
    <property type="molecule type" value="mRNA"/>
</dbReference>
<dbReference type="EMBL" id="BC043151">
    <property type="protein sequence ID" value="AAH43151.1"/>
    <property type="molecule type" value="mRNA"/>
</dbReference>
<dbReference type="CCDS" id="CCDS75075.1"/>
<dbReference type="RefSeq" id="NP_001272981.1">
    <property type="nucleotide sequence ID" value="NM_001286052.1"/>
</dbReference>
<dbReference type="RefSeq" id="NP_001272982.1">
    <property type="nucleotide sequence ID" value="NM_001286053.1"/>
</dbReference>
<dbReference type="RefSeq" id="NP_001272983.1">
    <property type="nucleotide sequence ID" value="NM_001286054.1"/>
</dbReference>
<dbReference type="RefSeq" id="NP_872330.1">
    <property type="nucleotide sequence ID" value="NM_182524.4"/>
</dbReference>
<dbReference type="SMR" id="Q8IYB9"/>
<dbReference type="FunCoup" id="Q8IYB9">
    <property type="interactions" value="36"/>
</dbReference>
<dbReference type="IntAct" id="Q8IYB9">
    <property type="interactions" value="4"/>
</dbReference>
<dbReference type="MINT" id="Q8IYB9"/>
<dbReference type="STRING" id="9606.ENSP00000477392"/>
<dbReference type="iPTMnet" id="Q8IYB9"/>
<dbReference type="PhosphoSitePlus" id="Q8IYB9"/>
<dbReference type="BioMuta" id="ZNF595"/>
<dbReference type="jPOST" id="Q8IYB9"/>
<dbReference type="MassIVE" id="Q8IYB9"/>
<dbReference type="PaxDb" id="9606-ENSP00000477392"/>
<dbReference type="PeptideAtlas" id="Q8IYB9"/>
<dbReference type="ProteomicsDB" id="71154"/>
<dbReference type="Pumba" id="Q8IYB9"/>
<dbReference type="Antibodypedia" id="74373">
    <property type="antibodies" value="12 antibodies from 5 providers"/>
</dbReference>
<dbReference type="DNASU" id="152687"/>
<dbReference type="Ensembl" id="ENST00000610261.6">
    <property type="protein sequence ID" value="ENSP00000477392.1"/>
    <property type="gene ID" value="ENSG00000272602.6"/>
</dbReference>
<dbReference type="GeneID" id="152687"/>
<dbReference type="KEGG" id="hsa:152687"/>
<dbReference type="MANE-Select" id="ENST00000610261.6">
    <property type="protein sequence ID" value="ENSP00000477392.1"/>
    <property type="RefSeq nucleotide sequence ID" value="NM_182524.4"/>
    <property type="RefSeq protein sequence ID" value="NP_872330.1"/>
</dbReference>
<dbReference type="UCSC" id="uc032szy.1">
    <property type="organism name" value="human"/>
</dbReference>
<dbReference type="AGR" id="HGNC:27196"/>
<dbReference type="CTD" id="152687"/>
<dbReference type="DisGeNET" id="152687"/>
<dbReference type="GeneCards" id="ZNF595"/>
<dbReference type="HGNC" id="HGNC:27196">
    <property type="gene designation" value="ZNF595"/>
</dbReference>
<dbReference type="HPA" id="ENSG00000272602">
    <property type="expression patterns" value="Tissue enriched (placenta)"/>
</dbReference>
<dbReference type="MalaCards" id="ZNF595"/>
<dbReference type="neXtProt" id="NX_Q8IYB9"/>
<dbReference type="OpenTargets" id="ENSG00000272602"/>
<dbReference type="VEuPathDB" id="HostDB:ENSG00000272602"/>
<dbReference type="eggNOG" id="KOG1721">
    <property type="taxonomic scope" value="Eukaryota"/>
</dbReference>
<dbReference type="GeneTree" id="ENSGT00940000161765"/>
<dbReference type="InParanoid" id="Q8IYB9"/>
<dbReference type="OMA" id="SSHMWTH"/>
<dbReference type="OrthoDB" id="9411774at2759"/>
<dbReference type="PAN-GO" id="Q8IYB9">
    <property type="GO annotations" value="4 GO annotations based on evolutionary models"/>
</dbReference>
<dbReference type="PhylomeDB" id="Q8IYB9"/>
<dbReference type="PathwayCommons" id="Q8IYB9"/>
<dbReference type="Reactome" id="R-HSA-212436">
    <property type="pathway name" value="Generic Transcription Pathway"/>
</dbReference>
<dbReference type="SignaLink" id="Q8IYB9"/>
<dbReference type="BioGRID-ORCS" id="152687">
    <property type="hits" value="27 hits in 298 CRISPR screens"/>
</dbReference>
<dbReference type="ChiTaRS" id="ZNF595">
    <property type="organism name" value="human"/>
</dbReference>
<dbReference type="GenomeRNAi" id="152687"/>
<dbReference type="Pharos" id="Q8IYB9">
    <property type="development level" value="Tdark"/>
</dbReference>
<dbReference type="PRO" id="PR:Q8IYB9"/>
<dbReference type="Proteomes" id="UP000005640">
    <property type="component" value="Chromosome 4"/>
</dbReference>
<dbReference type="RNAct" id="Q8IYB9">
    <property type="molecule type" value="protein"/>
</dbReference>
<dbReference type="Bgee" id="ENSG00000272602">
    <property type="expression patterns" value="Expressed in placenta and 109 other cell types or tissues"/>
</dbReference>
<dbReference type="ExpressionAtlas" id="Q8IYB9">
    <property type="expression patterns" value="baseline and differential"/>
</dbReference>
<dbReference type="GO" id="GO:0005634">
    <property type="term" value="C:nucleus"/>
    <property type="evidence" value="ECO:0000318"/>
    <property type="project" value="GO_Central"/>
</dbReference>
<dbReference type="GO" id="GO:0000981">
    <property type="term" value="F:DNA-binding transcription factor activity, RNA polymerase II-specific"/>
    <property type="evidence" value="ECO:0000318"/>
    <property type="project" value="GO_Central"/>
</dbReference>
<dbReference type="GO" id="GO:0000978">
    <property type="term" value="F:RNA polymerase II cis-regulatory region sequence-specific DNA binding"/>
    <property type="evidence" value="ECO:0000318"/>
    <property type="project" value="GO_Central"/>
</dbReference>
<dbReference type="GO" id="GO:0008270">
    <property type="term" value="F:zinc ion binding"/>
    <property type="evidence" value="ECO:0007669"/>
    <property type="project" value="UniProtKB-KW"/>
</dbReference>
<dbReference type="GO" id="GO:0006357">
    <property type="term" value="P:regulation of transcription by RNA polymerase II"/>
    <property type="evidence" value="ECO:0000318"/>
    <property type="project" value="GO_Central"/>
</dbReference>
<dbReference type="CDD" id="cd07765">
    <property type="entry name" value="KRAB_A-box"/>
    <property type="match status" value="1"/>
</dbReference>
<dbReference type="FunFam" id="3.30.160.60:FF:000688">
    <property type="entry name" value="zinc finger protein 197 isoform X1"/>
    <property type="match status" value="1"/>
</dbReference>
<dbReference type="FunFam" id="3.30.160.60:FF:001702">
    <property type="entry name" value="Zinc finger protein 224"/>
    <property type="match status" value="1"/>
</dbReference>
<dbReference type="FunFam" id="3.30.160.60:FF:000034">
    <property type="entry name" value="zinc finger protein 25"/>
    <property type="match status" value="5"/>
</dbReference>
<dbReference type="FunFam" id="3.30.160.60:FF:001868">
    <property type="entry name" value="Zinc finger protein 264"/>
    <property type="match status" value="2"/>
</dbReference>
<dbReference type="FunFam" id="3.30.160.60:FF:002259">
    <property type="entry name" value="zinc finger protein 271"/>
    <property type="match status" value="1"/>
</dbReference>
<dbReference type="FunFam" id="3.30.160.60:FF:002254">
    <property type="entry name" value="Zinc finger protein 540"/>
    <property type="match status" value="2"/>
</dbReference>
<dbReference type="FunFam" id="3.30.160.60:FF:000737">
    <property type="entry name" value="Zinc finger protein 565"/>
    <property type="match status" value="1"/>
</dbReference>
<dbReference type="FunFam" id="3.30.160.60:FF:000015">
    <property type="entry name" value="Zinc finger protein 569"/>
    <property type="match status" value="1"/>
</dbReference>
<dbReference type="FunFam" id="3.30.160.60:FF:000362">
    <property type="entry name" value="Zinc finger protein 606"/>
    <property type="match status" value="2"/>
</dbReference>
<dbReference type="FunFam" id="3.30.160.60:FF:000307">
    <property type="entry name" value="Zinc finger protein ZFP69 isoform 1"/>
    <property type="match status" value="1"/>
</dbReference>
<dbReference type="Gene3D" id="6.10.140.140">
    <property type="match status" value="1"/>
</dbReference>
<dbReference type="Gene3D" id="3.30.160.60">
    <property type="entry name" value="Classic Zinc Finger"/>
    <property type="match status" value="18"/>
</dbReference>
<dbReference type="InterPro" id="IPR001909">
    <property type="entry name" value="KRAB"/>
</dbReference>
<dbReference type="InterPro" id="IPR036051">
    <property type="entry name" value="KRAB_dom_sf"/>
</dbReference>
<dbReference type="InterPro" id="IPR036236">
    <property type="entry name" value="Znf_C2H2_sf"/>
</dbReference>
<dbReference type="InterPro" id="IPR013087">
    <property type="entry name" value="Znf_C2H2_type"/>
</dbReference>
<dbReference type="PANTHER" id="PTHR24399:SF75">
    <property type="entry name" value="ZFP14 ZINC FINGER PROTEIN-RELATED"/>
    <property type="match status" value="1"/>
</dbReference>
<dbReference type="PANTHER" id="PTHR24399">
    <property type="entry name" value="ZINC FINGER AND BTB DOMAIN-CONTAINING"/>
    <property type="match status" value="1"/>
</dbReference>
<dbReference type="Pfam" id="PF01352">
    <property type="entry name" value="KRAB"/>
    <property type="match status" value="1"/>
</dbReference>
<dbReference type="Pfam" id="PF00096">
    <property type="entry name" value="zf-C2H2"/>
    <property type="match status" value="16"/>
</dbReference>
<dbReference type="SMART" id="SM00349">
    <property type="entry name" value="KRAB"/>
    <property type="match status" value="1"/>
</dbReference>
<dbReference type="SMART" id="SM00355">
    <property type="entry name" value="ZnF_C2H2"/>
    <property type="match status" value="18"/>
</dbReference>
<dbReference type="SUPFAM" id="SSF57667">
    <property type="entry name" value="beta-beta-alpha zinc fingers"/>
    <property type="match status" value="10"/>
</dbReference>
<dbReference type="SUPFAM" id="SSF109640">
    <property type="entry name" value="KRAB domain (Kruppel-associated box)"/>
    <property type="match status" value="1"/>
</dbReference>
<dbReference type="PROSITE" id="PS50805">
    <property type="entry name" value="KRAB"/>
    <property type="match status" value="1"/>
</dbReference>
<dbReference type="PROSITE" id="PS00028">
    <property type="entry name" value="ZINC_FINGER_C2H2_1"/>
    <property type="match status" value="17"/>
</dbReference>
<dbReference type="PROSITE" id="PS50157">
    <property type="entry name" value="ZINC_FINGER_C2H2_2"/>
    <property type="match status" value="18"/>
</dbReference>
<reference key="1">
    <citation type="journal article" date="2007" name="BMC Genomics">
        <title>The full-ORF clone resource of the German cDNA consortium.</title>
        <authorList>
            <person name="Bechtel S."/>
            <person name="Rosenfelder H."/>
            <person name="Duda A."/>
            <person name="Schmidt C.P."/>
            <person name="Ernst U."/>
            <person name="Wellenreuther R."/>
            <person name="Mehrle A."/>
            <person name="Schuster C."/>
            <person name="Bahr A."/>
            <person name="Bloecker H."/>
            <person name="Heubner D."/>
            <person name="Hoerlein A."/>
            <person name="Michel G."/>
            <person name="Wedler H."/>
            <person name="Koehrer K."/>
            <person name="Ottenwaelder B."/>
            <person name="Poustka A."/>
            <person name="Wiemann S."/>
            <person name="Schupp I."/>
        </authorList>
    </citation>
    <scope>NUCLEOTIDE SEQUENCE [LARGE SCALE MRNA]</scope>
    <source>
        <tissue evidence="4">Bone marrow</tissue>
    </source>
</reference>
<reference key="2">
    <citation type="journal article" date="2005" name="Nature">
        <title>Generation and annotation of the DNA sequences of human chromosomes 2 and 4.</title>
        <authorList>
            <person name="Hillier L.W."/>
            <person name="Graves T.A."/>
            <person name="Fulton R.S."/>
            <person name="Fulton L.A."/>
            <person name="Pepin K.H."/>
            <person name="Minx P."/>
            <person name="Wagner-McPherson C."/>
            <person name="Layman D."/>
            <person name="Wylie K."/>
            <person name="Sekhon M."/>
            <person name="Becker M.C."/>
            <person name="Fewell G.A."/>
            <person name="Delehaunty K.D."/>
            <person name="Miner T.L."/>
            <person name="Nash W.E."/>
            <person name="Kremitzki C."/>
            <person name="Oddy L."/>
            <person name="Du H."/>
            <person name="Sun H."/>
            <person name="Bradshaw-Cordum H."/>
            <person name="Ali J."/>
            <person name="Carter J."/>
            <person name="Cordes M."/>
            <person name="Harris A."/>
            <person name="Isak A."/>
            <person name="van Brunt A."/>
            <person name="Nguyen C."/>
            <person name="Du F."/>
            <person name="Courtney L."/>
            <person name="Kalicki J."/>
            <person name="Ozersky P."/>
            <person name="Abbott S."/>
            <person name="Armstrong J."/>
            <person name="Belter E.A."/>
            <person name="Caruso L."/>
            <person name="Cedroni M."/>
            <person name="Cotton M."/>
            <person name="Davidson T."/>
            <person name="Desai A."/>
            <person name="Elliott G."/>
            <person name="Erb T."/>
            <person name="Fronick C."/>
            <person name="Gaige T."/>
            <person name="Haakenson W."/>
            <person name="Haglund K."/>
            <person name="Holmes A."/>
            <person name="Harkins R."/>
            <person name="Kim K."/>
            <person name="Kruchowski S.S."/>
            <person name="Strong C.M."/>
            <person name="Grewal N."/>
            <person name="Goyea E."/>
            <person name="Hou S."/>
            <person name="Levy A."/>
            <person name="Martinka S."/>
            <person name="Mead K."/>
            <person name="McLellan M.D."/>
            <person name="Meyer R."/>
            <person name="Randall-Maher J."/>
            <person name="Tomlinson C."/>
            <person name="Dauphin-Kohlberg S."/>
            <person name="Kozlowicz-Reilly A."/>
            <person name="Shah N."/>
            <person name="Swearengen-Shahid S."/>
            <person name="Snider J."/>
            <person name="Strong J.T."/>
            <person name="Thompson J."/>
            <person name="Yoakum M."/>
            <person name="Leonard S."/>
            <person name="Pearman C."/>
            <person name="Trani L."/>
            <person name="Radionenko M."/>
            <person name="Waligorski J.E."/>
            <person name="Wang C."/>
            <person name="Rock S.M."/>
            <person name="Tin-Wollam A.-M."/>
            <person name="Maupin R."/>
            <person name="Latreille P."/>
            <person name="Wendl M.C."/>
            <person name="Yang S.-P."/>
            <person name="Pohl C."/>
            <person name="Wallis J.W."/>
            <person name="Spieth J."/>
            <person name="Bieri T.A."/>
            <person name="Berkowicz N."/>
            <person name="Nelson J.O."/>
            <person name="Osborne J."/>
            <person name="Ding L."/>
            <person name="Meyer R."/>
            <person name="Sabo A."/>
            <person name="Shotland Y."/>
            <person name="Sinha P."/>
            <person name="Wohldmann P.E."/>
            <person name="Cook L.L."/>
            <person name="Hickenbotham M.T."/>
            <person name="Eldred J."/>
            <person name="Williams D."/>
            <person name="Jones T.A."/>
            <person name="She X."/>
            <person name="Ciccarelli F.D."/>
            <person name="Izaurralde E."/>
            <person name="Taylor J."/>
            <person name="Schmutz J."/>
            <person name="Myers R.M."/>
            <person name="Cox D.R."/>
            <person name="Huang X."/>
            <person name="McPherson J.D."/>
            <person name="Mardis E.R."/>
            <person name="Clifton S.W."/>
            <person name="Warren W.C."/>
            <person name="Chinwalla A.T."/>
            <person name="Eddy S.R."/>
            <person name="Marra M.A."/>
            <person name="Ovcharenko I."/>
            <person name="Furey T.S."/>
            <person name="Miller W."/>
            <person name="Eichler E.E."/>
            <person name="Bork P."/>
            <person name="Suyama M."/>
            <person name="Torrents D."/>
            <person name="Waterston R.H."/>
            <person name="Wilson R.K."/>
        </authorList>
    </citation>
    <scope>NUCLEOTIDE SEQUENCE [LARGE SCALE GENOMIC DNA]</scope>
</reference>
<reference key="3">
    <citation type="journal article" date="2004" name="Genome Res.">
        <title>The status, quality, and expansion of the NIH full-length cDNA project: the Mammalian Gene Collection (MGC).</title>
        <authorList>
            <consortium name="The MGC Project Team"/>
        </authorList>
    </citation>
    <scope>NUCLEOTIDE SEQUENCE [LARGE SCALE MRNA]</scope>
    <source>
        <tissue>Testis</tissue>
    </source>
</reference>
<name>ZN595_HUMAN</name>
<feature type="chain" id="PRO_0000047686" description="Zinc finger protein 595">
    <location>
        <begin position="1"/>
        <end position="648"/>
    </location>
</feature>
<feature type="domain" description="KRAB" evidence="2">
    <location>
        <begin position="4"/>
        <end position="75"/>
    </location>
</feature>
<feature type="zinc finger region" description="C2H2-type 1" evidence="1">
    <location>
        <begin position="145"/>
        <end position="167"/>
    </location>
</feature>
<feature type="zinc finger region" description="C2H2-type 2" evidence="1">
    <location>
        <begin position="173"/>
        <end position="194"/>
    </location>
</feature>
<feature type="zinc finger region" description="C2H2-type 3" evidence="1">
    <location>
        <begin position="200"/>
        <end position="222"/>
    </location>
</feature>
<feature type="zinc finger region" description="C2H2-type 4" evidence="1">
    <location>
        <begin position="228"/>
        <end position="250"/>
    </location>
</feature>
<feature type="zinc finger region" description="C2H2-type 5" evidence="1">
    <location>
        <begin position="256"/>
        <end position="278"/>
    </location>
</feature>
<feature type="zinc finger region" description="C2H2-type 6" evidence="1">
    <location>
        <begin position="284"/>
        <end position="306"/>
    </location>
</feature>
<feature type="zinc finger region" description="C2H2-type 7" evidence="1">
    <location>
        <begin position="312"/>
        <end position="334"/>
    </location>
</feature>
<feature type="zinc finger region" description="C2H2-type 8" evidence="1">
    <location>
        <begin position="340"/>
        <end position="362"/>
    </location>
</feature>
<feature type="zinc finger region" description="C2H2-type 9" evidence="1">
    <location>
        <begin position="368"/>
        <end position="390"/>
    </location>
</feature>
<feature type="zinc finger region" description="C2H2-type 10" evidence="1">
    <location>
        <begin position="396"/>
        <end position="418"/>
    </location>
</feature>
<feature type="zinc finger region" description="C2H2-type 11" evidence="1">
    <location>
        <begin position="424"/>
        <end position="446"/>
    </location>
</feature>
<feature type="zinc finger region" description="C2H2-type 12" evidence="1">
    <location>
        <begin position="452"/>
        <end position="474"/>
    </location>
</feature>
<feature type="zinc finger region" description="C2H2-type 13" evidence="1">
    <location>
        <begin position="480"/>
        <end position="502"/>
    </location>
</feature>
<feature type="zinc finger region" description="C2H2-type 14" evidence="1">
    <location>
        <begin position="508"/>
        <end position="530"/>
    </location>
</feature>
<feature type="zinc finger region" description="C2H2-type 15" evidence="1">
    <location>
        <begin position="536"/>
        <end position="558"/>
    </location>
</feature>
<feature type="zinc finger region" description="C2H2-type 16" evidence="1">
    <location>
        <begin position="564"/>
        <end position="586"/>
    </location>
</feature>
<feature type="zinc finger region" description="C2H2-type 17" evidence="1">
    <location>
        <begin position="592"/>
        <end position="614"/>
    </location>
</feature>
<feature type="zinc finger region" description="C2H2-type 18" evidence="1">
    <location>
        <begin position="620"/>
        <end position="642"/>
    </location>
</feature>
<feature type="sequence variant" id="VAR_061958" description="In dbSNP:rs2006764.">
    <original>A</original>
    <variation>G</variation>
    <location>
        <position position="628"/>
    </location>
</feature>
<feature type="sequence conflict" description="In Ref. 3; AAH36110/AAH43151." ref="3">
    <original>L</original>
    <variation>M</variation>
    <location>
        <position position="299"/>
    </location>
</feature>
<feature type="sequence conflict" description="In Ref. 3; AAH36110/AAH43151." ref="3">
    <original>T</original>
    <variation>A</variation>
    <location>
        <position position="397"/>
    </location>
</feature>
<keyword id="KW-0238">DNA-binding</keyword>
<keyword id="KW-0479">Metal-binding</keyword>
<keyword id="KW-0539">Nucleus</keyword>
<keyword id="KW-1267">Proteomics identification</keyword>
<keyword id="KW-1185">Reference proteome</keyword>
<keyword id="KW-0677">Repeat</keyword>
<keyword id="KW-0804">Transcription</keyword>
<keyword id="KW-0805">Transcription regulation</keyword>
<keyword id="KW-0862">Zinc</keyword>
<keyword id="KW-0863">Zinc-finger</keyword>
<sequence>MELVTFRDVAIEFSPEEWKCLDPAQQNLYRDVMLENYRNLVSLGFVISNPDLVTCLEQIKEPCNLKIHETAAKPPAICSPFSQDLSPVQGIEDSFHKLILKRYEKCGHENLQLRKGCKRVNECKVQKGVNNGVYQCLSTTQSKIFQCNTCVKVFSKFSNSNKHKIRHTGEKPFKCTECGRSFYMSHLTQHTGIHAGEKPYKCEKCGKAFNRSTSLSKHKRIHTGEKPYTCEECGKAFRRSTVLNEHKKIHTGEKPYKCEECGKAFTRSTTLNEHKKIHTGEKPYKCKECGKAFRWSTSLNEHKNIHTGEKPYKCKECGKAFRQSRSLNEHKNIHTGEKPYTCEKCGKAFNQSSSLIIHRSIHSEQKLYKCEECGKAFTWSSSLNKHKRIHTGEKPYTCEECGKAFYRSSHLAKHKRIHTGEKPYTCEECGKAFNQSSTLILHKRIHSGQKPYKCEECGKAFTRSTTLNEHKKIHTGEKPYKCEECGKAFIWSASLNEHKNIHTGEKPYKCKECGKAFNQSSGLIIHRSIHSEQKLYKCEECGKAFTRSTALNEHKKIHSGEKPYKCKECGKAYNLSSTLTKHKRIHTGEKPFTCEECGKAFNWSSSLTKHKIIHTGEKSYKCEECGKAFNRPSTLTVHKRIHTGKEHS</sequence>
<protein>
    <recommendedName>
        <fullName>Zinc finger protein 595</fullName>
    </recommendedName>
</protein>
<organism>
    <name type="scientific">Homo sapiens</name>
    <name type="common">Human</name>
    <dbReference type="NCBI Taxonomy" id="9606"/>
    <lineage>
        <taxon>Eukaryota</taxon>
        <taxon>Metazoa</taxon>
        <taxon>Chordata</taxon>
        <taxon>Craniata</taxon>
        <taxon>Vertebrata</taxon>
        <taxon>Euteleostomi</taxon>
        <taxon>Mammalia</taxon>
        <taxon>Eutheria</taxon>
        <taxon>Euarchontoglires</taxon>
        <taxon>Primates</taxon>
        <taxon>Haplorrhini</taxon>
        <taxon>Catarrhini</taxon>
        <taxon>Hominidae</taxon>
        <taxon>Homo</taxon>
    </lineage>
</organism>
<comment type="function">
    <text>May be involved in transcriptional regulation.</text>
</comment>
<comment type="interaction">
    <interactant intactId="EBI-2682172">
        <id>Q8IYB9</id>
    </interactant>
    <interactant intactId="EBI-12012928">
        <id>P60371</id>
        <label>KRTAP10-6</label>
    </interactant>
    <organismsDiffer>false</organismsDiffer>
    <experiments>3</experiments>
</comment>
<comment type="subcellular location">
    <subcellularLocation>
        <location evidence="3">Nucleus</location>
    </subcellularLocation>
</comment>
<comment type="similarity">
    <text evidence="3">Belongs to the krueppel C2H2-type zinc-finger protein family.</text>
</comment>
<proteinExistence type="evidence at protein level"/>
<gene>
    <name type="primary">ZNF595</name>
</gene>